<keyword id="KW-0963">Cytoplasm</keyword>
<keyword id="KW-0489">Methyltransferase</keyword>
<keyword id="KW-1185">Reference proteome</keyword>
<keyword id="KW-0694">RNA-binding</keyword>
<keyword id="KW-0698">rRNA processing</keyword>
<keyword id="KW-0949">S-adenosyl-L-methionine</keyword>
<keyword id="KW-0808">Transferase</keyword>
<sequence length="254" mass="29660">MSHNFKKSLGQNFLQDKNIIEKIVNFIPLENEDVLEIGPGQGALTNLLVKKSKNVLAYEIDKELIPFLKEKIKAKNFTLKHEDFLKSEIDFQDKKIIIANIPYFITSDILFKIFENHKFFTKALIMVQKEIADKLIAKANDSNYGKLSVSSQFFANIKKVINVPRTCFYPQPNVDSAVVYFEFKNDIENIDIEKFLVFIKTCFSQQRKKLSNNLKNVYDLEKIKSVLKKLNLSFEVRPQQIDLNVYKILFYELN</sequence>
<gene>
    <name evidence="1" type="primary">rsmA</name>
    <name evidence="1" type="synonym">ksgA</name>
    <name type="ordered locus">MMOB5640</name>
</gene>
<reference key="1">
    <citation type="journal article" date="2004" name="Genome Res.">
        <title>The complete genome and proteome of Mycoplasma mobile.</title>
        <authorList>
            <person name="Jaffe J.D."/>
            <person name="Stange-Thomann N."/>
            <person name="Smith C."/>
            <person name="DeCaprio D."/>
            <person name="Fisher S."/>
            <person name="Butler J."/>
            <person name="Calvo S."/>
            <person name="Elkins T."/>
            <person name="FitzGerald M.G."/>
            <person name="Hafez N."/>
            <person name="Kodira C.D."/>
            <person name="Major J."/>
            <person name="Wang S."/>
            <person name="Wilkinson J."/>
            <person name="Nicol R."/>
            <person name="Nusbaum C."/>
            <person name="Birren B."/>
            <person name="Berg H.C."/>
            <person name="Church G.M."/>
        </authorList>
    </citation>
    <scope>NUCLEOTIDE SEQUENCE [LARGE SCALE GENOMIC DNA]</scope>
    <source>
        <strain>ATCC 43663 / NCTC 11711 / 163 K</strain>
    </source>
</reference>
<dbReference type="EC" id="2.1.1.182" evidence="1"/>
<dbReference type="EMBL" id="AE017308">
    <property type="protein sequence ID" value="AAT28050.1"/>
    <property type="molecule type" value="Genomic_DNA"/>
</dbReference>
<dbReference type="RefSeq" id="WP_011265084.1">
    <property type="nucleotide sequence ID" value="NC_006908.1"/>
</dbReference>
<dbReference type="SMR" id="Q6KH80"/>
<dbReference type="STRING" id="267748.MMOB5640"/>
<dbReference type="KEGG" id="mmo:MMOB5640"/>
<dbReference type="eggNOG" id="COG0030">
    <property type="taxonomic scope" value="Bacteria"/>
</dbReference>
<dbReference type="HOGENOM" id="CLU_041220_0_0_14"/>
<dbReference type="OrthoDB" id="9814755at2"/>
<dbReference type="Proteomes" id="UP000009072">
    <property type="component" value="Chromosome"/>
</dbReference>
<dbReference type="GO" id="GO:0005829">
    <property type="term" value="C:cytosol"/>
    <property type="evidence" value="ECO:0007669"/>
    <property type="project" value="TreeGrafter"/>
</dbReference>
<dbReference type="GO" id="GO:0052908">
    <property type="term" value="F:16S rRNA (adenine(1518)-N(6)/adenine(1519)-N(6))-dimethyltransferase activity"/>
    <property type="evidence" value="ECO:0007669"/>
    <property type="project" value="UniProtKB-EC"/>
</dbReference>
<dbReference type="GO" id="GO:0003723">
    <property type="term" value="F:RNA binding"/>
    <property type="evidence" value="ECO:0007669"/>
    <property type="project" value="UniProtKB-KW"/>
</dbReference>
<dbReference type="CDD" id="cd02440">
    <property type="entry name" value="AdoMet_MTases"/>
    <property type="match status" value="1"/>
</dbReference>
<dbReference type="Gene3D" id="1.10.8.100">
    <property type="entry name" value="Ribosomal RNA adenine dimethylase-like, domain 2"/>
    <property type="match status" value="1"/>
</dbReference>
<dbReference type="Gene3D" id="3.40.50.150">
    <property type="entry name" value="Vaccinia Virus protein VP39"/>
    <property type="match status" value="1"/>
</dbReference>
<dbReference type="HAMAP" id="MF_00607">
    <property type="entry name" value="16SrRNA_methyltr_A"/>
    <property type="match status" value="1"/>
</dbReference>
<dbReference type="InterPro" id="IPR001737">
    <property type="entry name" value="KsgA/Erm"/>
</dbReference>
<dbReference type="InterPro" id="IPR023165">
    <property type="entry name" value="rRNA_Ade_diMease-like_C"/>
</dbReference>
<dbReference type="InterPro" id="IPR020596">
    <property type="entry name" value="rRNA_Ade_Mease_Trfase_CS"/>
</dbReference>
<dbReference type="InterPro" id="IPR020598">
    <property type="entry name" value="rRNA_Ade_methylase_Trfase_N"/>
</dbReference>
<dbReference type="InterPro" id="IPR011530">
    <property type="entry name" value="rRNA_adenine_dimethylase"/>
</dbReference>
<dbReference type="InterPro" id="IPR029063">
    <property type="entry name" value="SAM-dependent_MTases_sf"/>
</dbReference>
<dbReference type="NCBIfam" id="TIGR00755">
    <property type="entry name" value="ksgA"/>
    <property type="match status" value="1"/>
</dbReference>
<dbReference type="PANTHER" id="PTHR11727">
    <property type="entry name" value="DIMETHYLADENOSINE TRANSFERASE"/>
    <property type="match status" value="1"/>
</dbReference>
<dbReference type="PANTHER" id="PTHR11727:SF7">
    <property type="entry name" value="DIMETHYLADENOSINE TRANSFERASE-RELATED"/>
    <property type="match status" value="1"/>
</dbReference>
<dbReference type="Pfam" id="PF00398">
    <property type="entry name" value="RrnaAD"/>
    <property type="match status" value="1"/>
</dbReference>
<dbReference type="SMART" id="SM00650">
    <property type="entry name" value="rADc"/>
    <property type="match status" value="1"/>
</dbReference>
<dbReference type="SUPFAM" id="SSF53335">
    <property type="entry name" value="S-adenosyl-L-methionine-dependent methyltransferases"/>
    <property type="match status" value="1"/>
</dbReference>
<dbReference type="PROSITE" id="PS01131">
    <property type="entry name" value="RRNA_A_DIMETH"/>
    <property type="match status" value="1"/>
</dbReference>
<dbReference type="PROSITE" id="PS51689">
    <property type="entry name" value="SAM_RNA_A_N6_MT"/>
    <property type="match status" value="1"/>
</dbReference>
<protein>
    <recommendedName>
        <fullName evidence="1">Ribosomal RNA small subunit methyltransferase A</fullName>
        <ecNumber evidence="1">2.1.1.182</ecNumber>
    </recommendedName>
    <alternativeName>
        <fullName evidence="1">16S rRNA (adenine(1518)-N(6)/adenine(1519)-N(6))-dimethyltransferase</fullName>
    </alternativeName>
    <alternativeName>
        <fullName evidence="1">16S rRNA dimethyladenosine transferase</fullName>
    </alternativeName>
    <alternativeName>
        <fullName evidence="1">16S rRNA dimethylase</fullName>
    </alternativeName>
    <alternativeName>
        <fullName evidence="1">S-adenosylmethionine-6-N', N'-adenosyl(rRNA) dimethyltransferase</fullName>
    </alternativeName>
</protein>
<feature type="chain" id="PRO_0000101561" description="Ribosomal RNA small subunit methyltransferase A">
    <location>
        <begin position="1"/>
        <end position="254"/>
    </location>
</feature>
<feature type="binding site" evidence="1">
    <location>
        <position position="12"/>
    </location>
    <ligand>
        <name>S-adenosyl-L-methionine</name>
        <dbReference type="ChEBI" id="CHEBI:59789"/>
    </ligand>
</feature>
<feature type="binding site" evidence="1">
    <location>
        <position position="14"/>
    </location>
    <ligand>
        <name>S-adenosyl-L-methionine</name>
        <dbReference type="ChEBI" id="CHEBI:59789"/>
    </ligand>
</feature>
<feature type="binding site" evidence="1">
    <location>
        <position position="38"/>
    </location>
    <ligand>
        <name>S-adenosyl-L-methionine</name>
        <dbReference type="ChEBI" id="CHEBI:59789"/>
    </ligand>
</feature>
<feature type="binding site" evidence="1">
    <location>
        <position position="59"/>
    </location>
    <ligand>
        <name>S-adenosyl-L-methionine</name>
        <dbReference type="ChEBI" id="CHEBI:59789"/>
    </ligand>
</feature>
<feature type="binding site" evidence="1">
    <location>
        <position position="83"/>
    </location>
    <ligand>
        <name>S-adenosyl-L-methionine</name>
        <dbReference type="ChEBI" id="CHEBI:59789"/>
    </ligand>
</feature>
<feature type="binding site" evidence="1">
    <location>
        <position position="100"/>
    </location>
    <ligand>
        <name>S-adenosyl-L-methionine</name>
        <dbReference type="ChEBI" id="CHEBI:59789"/>
    </ligand>
</feature>
<comment type="function">
    <text evidence="1">Specifically dimethylates two adjacent adenosines (A1518 and A1519) in the loop of a conserved hairpin near the 3'-end of 16S rRNA in the 30S particle. May play a critical role in biogenesis of 30S subunits.</text>
</comment>
<comment type="catalytic activity">
    <reaction evidence="1">
        <text>adenosine(1518)/adenosine(1519) in 16S rRNA + 4 S-adenosyl-L-methionine = N(6)-dimethyladenosine(1518)/N(6)-dimethyladenosine(1519) in 16S rRNA + 4 S-adenosyl-L-homocysteine + 4 H(+)</text>
        <dbReference type="Rhea" id="RHEA:19609"/>
        <dbReference type="Rhea" id="RHEA-COMP:10232"/>
        <dbReference type="Rhea" id="RHEA-COMP:10233"/>
        <dbReference type="ChEBI" id="CHEBI:15378"/>
        <dbReference type="ChEBI" id="CHEBI:57856"/>
        <dbReference type="ChEBI" id="CHEBI:59789"/>
        <dbReference type="ChEBI" id="CHEBI:74411"/>
        <dbReference type="ChEBI" id="CHEBI:74493"/>
        <dbReference type="EC" id="2.1.1.182"/>
    </reaction>
</comment>
<comment type="subcellular location">
    <subcellularLocation>
        <location evidence="1">Cytoplasm</location>
    </subcellularLocation>
</comment>
<comment type="similarity">
    <text evidence="1">Belongs to the class I-like SAM-binding methyltransferase superfamily. rRNA adenine N(6)-methyltransferase family. RsmA subfamily.</text>
</comment>
<evidence type="ECO:0000255" key="1">
    <source>
        <dbReference type="HAMAP-Rule" id="MF_00607"/>
    </source>
</evidence>
<name>RSMA_MYCM1</name>
<proteinExistence type="inferred from homology"/>
<accession>Q6KH80</accession>
<organism>
    <name type="scientific">Mycoplasma mobile (strain ATCC 43663 / 163K / NCTC 11711)</name>
    <name type="common">Mesomycoplasma mobile</name>
    <dbReference type="NCBI Taxonomy" id="267748"/>
    <lineage>
        <taxon>Bacteria</taxon>
        <taxon>Bacillati</taxon>
        <taxon>Mycoplasmatota</taxon>
        <taxon>Mycoplasmoidales</taxon>
        <taxon>Metamycoplasmataceae</taxon>
        <taxon>Mesomycoplasma</taxon>
    </lineage>
</organism>